<proteinExistence type="inferred from homology"/>
<dbReference type="EMBL" id="CR931997">
    <property type="protein sequence ID" value="CAI37976.1"/>
    <property type="molecule type" value="Genomic_DNA"/>
</dbReference>
<dbReference type="RefSeq" id="WP_011274139.1">
    <property type="nucleotide sequence ID" value="NC_007164.1"/>
</dbReference>
<dbReference type="SMR" id="Q4JT81"/>
<dbReference type="STRING" id="306537.jk1799"/>
<dbReference type="KEGG" id="cjk:jk1799"/>
<dbReference type="PATRIC" id="fig|306537.10.peg.1824"/>
<dbReference type="eggNOG" id="COG0094">
    <property type="taxonomic scope" value="Bacteria"/>
</dbReference>
<dbReference type="HOGENOM" id="CLU_061015_2_1_11"/>
<dbReference type="OrthoDB" id="9806626at2"/>
<dbReference type="Proteomes" id="UP000000545">
    <property type="component" value="Chromosome"/>
</dbReference>
<dbReference type="GO" id="GO:1990904">
    <property type="term" value="C:ribonucleoprotein complex"/>
    <property type="evidence" value="ECO:0007669"/>
    <property type="project" value="UniProtKB-KW"/>
</dbReference>
<dbReference type="GO" id="GO:0005840">
    <property type="term" value="C:ribosome"/>
    <property type="evidence" value="ECO:0007669"/>
    <property type="project" value="UniProtKB-KW"/>
</dbReference>
<dbReference type="GO" id="GO:0019843">
    <property type="term" value="F:rRNA binding"/>
    <property type="evidence" value="ECO:0007669"/>
    <property type="project" value="UniProtKB-UniRule"/>
</dbReference>
<dbReference type="GO" id="GO:0003735">
    <property type="term" value="F:structural constituent of ribosome"/>
    <property type="evidence" value="ECO:0007669"/>
    <property type="project" value="InterPro"/>
</dbReference>
<dbReference type="GO" id="GO:0000049">
    <property type="term" value="F:tRNA binding"/>
    <property type="evidence" value="ECO:0007669"/>
    <property type="project" value="UniProtKB-UniRule"/>
</dbReference>
<dbReference type="GO" id="GO:0006412">
    <property type="term" value="P:translation"/>
    <property type="evidence" value="ECO:0007669"/>
    <property type="project" value="UniProtKB-UniRule"/>
</dbReference>
<dbReference type="FunFam" id="3.30.1440.10:FF:000001">
    <property type="entry name" value="50S ribosomal protein L5"/>
    <property type="match status" value="1"/>
</dbReference>
<dbReference type="Gene3D" id="3.30.1440.10">
    <property type="match status" value="1"/>
</dbReference>
<dbReference type="HAMAP" id="MF_01333_B">
    <property type="entry name" value="Ribosomal_uL5_B"/>
    <property type="match status" value="1"/>
</dbReference>
<dbReference type="InterPro" id="IPR002132">
    <property type="entry name" value="Ribosomal_uL5"/>
</dbReference>
<dbReference type="InterPro" id="IPR020930">
    <property type="entry name" value="Ribosomal_uL5_bac-type"/>
</dbReference>
<dbReference type="InterPro" id="IPR031309">
    <property type="entry name" value="Ribosomal_uL5_C"/>
</dbReference>
<dbReference type="InterPro" id="IPR022803">
    <property type="entry name" value="Ribosomal_uL5_dom_sf"/>
</dbReference>
<dbReference type="InterPro" id="IPR031310">
    <property type="entry name" value="Ribosomal_uL5_N"/>
</dbReference>
<dbReference type="NCBIfam" id="NF000585">
    <property type="entry name" value="PRK00010.1"/>
    <property type="match status" value="1"/>
</dbReference>
<dbReference type="PANTHER" id="PTHR11994">
    <property type="entry name" value="60S RIBOSOMAL PROTEIN L11-RELATED"/>
    <property type="match status" value="1"/>
</dbReference>
<dbReference type="Pfam" id="PF00281">
    <property type="entry name" value="Ribosomal_L5"/>
    <property type="match status" value="1"/>
</dbReference>
<dbReference type="Pfam" id="PF00673">
    <property type="entry name" value="Ribosomal_L5_C"/>
    <property type="match status" value="1"/>
</dbReference>
<dbReference type="PIRSF" id="PIRSF002161">
    <property type="entry name" value="Ribosomal_L5"/>
    <property type="match status" value="1"/>
</dbReference>
<dbReference type="SUPFAM" id="SSF55282">
    <property type="entry name" value="RL5-like"/>
    <property type="match status" value="1"/>
</dbReference>
<name>RL5_CORJK</name>
<protein>
    <recommendedName>
        <fullName evidence="1">Large ribosomal subunit protein uL5</fullName>
    </recommendedName>
    <alternativeName>
        <fullName evidence="2">50S ribosomal protein L5</fullName>
    </alternativeName>
</protein>
<reference key="1">
    <citation type="journal article" date="2005" name="J. Bacteriol.">
        <title>Complete genome sequence and analysis of the multiresistant nosocomial pathogen Corynebacterium jeikeium K411, a lipid-requiring bacterium of the human skin flora.</title>
        <authorList>
            <person name="Tauch A."/>
            <person name="Kaiser O."/>
            <person name="Hain T."/>
            <person name="Goesmann A."/>
            <person name="Weisshaar B."/>
            <person name="Albersmeier A."/>
            <person name="Bekel T."/>
            <person name="Bischoff N."/>
            <person name="Brune I."/>
            <person name="Chakraborty T."/>
            <person name="Kalinowski J."/>
            <person name="Meyer F."/>
            <person name="Rupp O."/>
            <person name="Schneiker S."/>
            <person name="Viehoever P."/>
            <person name="Puehler A."/>
        </authorList>
    </citation>
    <scope>NUCLEOTIDE SEQUENCE [LARGE SCALE GENOMIC DNA]</scope>
    <source>
        <strain>K411</strain>
    </source>
</reference>
<comment type="function">
    <text evidence="1">This is one of the proteins that bind and probably mediate the attachment of the 5S RNA into the large ribosomal subunit, where it forms part of the central protuberance. In the 70S ribosome it contacts protein S13 of the 30S subunit (bridge B1b), connecting the 2 subunits; this bridge is implicated in subunit movement. Contacts the P site tRNA; the 5S rRNA and some of its associated proteins might help stabilize positioning of ribosome-bound tRNAs.</text>
</comment>
<comment type="subunit">
    <text evidence="1">Part of the 50S ribosomal subunit; part of the 5S rRNA/L5/L18/L25 subcomplex. Contacts the 5S rRNA and the P site tRNA. Forms a bridge to the 30S subunit in the 70S ribosome.</text>
</comment>
<comment type="similarity">
    <text evidence="1">Belongs to the universal ribosomal protein uL5 family.</text>
</comment>
<accession>Q4JT81</accession>
<gene>
    <name evidence="1" type="primary">rplE</name>
    <name type="ordered locus">jk1799</name>
</gene>
<sequence length="189" mass="21506">MSENYTPRLKTRYREEIREKLNGEFSYENVMQIPGVTKVVVNMGVGDAARDSKLINGAIEDLTKITGQKPQIRTAKKAIANFKLREGMPIGARVTLRGDRMWEFLDRLLTVALPRIRDFRGLNDKQFDGHGNYTFGLSEQSMFYEIDVDKIDRPRGMNITVVTTATNDDEGRALLRELGFPFKQKGSAE</sequence>
<organism>
    <name type="scientific">Corynebacterium jeikeium (strain K411)</name>
    <dbReference type="NCBI Taxonomy" id="306537"/>
    <lineage>
        <taxon>Bacteria</taxon>
        <taxon>Bacillati</taxon>
        <taxon>Actinomycetota</taxon>
        <taxon>Actinomycetes</taxon>
        <taxon>Mycobacteriales</taxon>
        <taxon>Corynebacteriaceae</taxon>
        <taxon>Corynebacterium</taxon>
    </lineage>
</organism>
<feature type="chain" id="PRO_0000242990" description="Large ribosomal subunit protein uL5">
    <location>
        <begin position="1"/>
        <end position="189"/>
    </location>
</feature>
<evidence type="ECO:0000255" key="1">
    <source>
        <dbReference type="HAMAP-Rule" id="MF_01333"/>
    </source>
</evidence>
<evidence type="ECO:0000305" key="2"/>
<keyword id="KW-1185">Reference proteome</keyword>
<keyword id="KW-0687">Ribonucleoprotein</keyword>
<keyword id="KW-0689">Ribosomal protein</keyword>
<keyword id="KW-0694">RNA-binding</keyword>
<keyword id="KW-0699">rRNA-binding</keyword>
<keyword id="KW-0820">tRNA-binding</keyword>